<protein>
    <recommendedName>
        <fullName evidence="1">tRNA 5-methylaminomethyl-2-thiouridine biosynthesis bifunctional protein MnmC</fullName>
        <shortName evidence="1">tRNA mnm(5)s(2)U biosynthesis bifunctional protein</shortName>
    </recommendedName>
    <domain>
        <recommendedName>
            <fullName evidence="1">tRNA (mnm(5)s(2)U34)-methyltransferase</fullName>
            <ecNumber evidence="1">2.1.1.61</ecNumber>
        </recommendedName>
    </domain>
    <domain>
        <recommendedName>
            <fullName evidence="1">FAD-dependent cmnm(5)s(2)U34 oxidoreductase</fullName>
            <ecNumber evidence="1">1.5.-.-</ecNumber>
        </recommendedName>
    </domain>
</protein>
<organism>
    <name type="scientific">Escherichia coli O139:H28 (strain E24377A / ETEC)</name>
    <dbReference type="NCBI Taxonomy" id="331111"/>
    <lineage>
        <taxon>Bacteria</taxon>
        <taxon>Pseudomonadati</taxon>
        <taxon>Pseudomonadota</taxon>
        <taxon>Gammaproteobacteria</taxon>
        <taxon>Enterobacterales</taxon>
        <taxon>Enterobacteriaceae</taxon>
        <taxon>Escherichia</taxon>
    </lineage>
</organism>
<feature type="chain" id="PRO_1000064992" description="tRNA 5-methylaminomethyl-2-thiouridine biosynthesis bifunctional protein MnmC">
    <location>
        <begin position="1"/>
        <end position="668"/>
    </location>
</feature>
<feature type="region of interest" description="tRNA (mnm(5)s(2)U34)-methyltransferase">
    <location>
        <begin position="1"/>
        <end position="245"/>
    </location>
</feature>
<feature type="region of interest" description="FAD-dependent cmnm(5)s(2)U34 oxidoreductase">
    <location>
        <begin position="270"/>
        <end position="668"/>
    </location>
</feature>
<comment type="function">
    <text evidence="1">Catalyzes the last two steps in the biosynthesis of 5-methylaminomethyl-2-thiouridine (mnm(5)s(2)U) at the wobble position (U34) in tRNA. Catalyzes the FAD-dependent demodification of cmnm(5)s(2)U34 to nm(5)s(2)U34, followed by the transfer of a methyl group from S-adenosyl-L-methionine to nm(5)s(2)U34, to form mnm(5)s(2)U34.</text>
</comment>
<comment type="catalytic activity">
    <reaction evidence="1">
        <text>5-aminomethyl-2-thiouridine(34) in tRNA + S-adenosyl-L-methionine = 5-methylaminomethyl-2-thiouridine(34) in tRNA + S-adenosyl-L-homocysteine + H(+)</text>
        <dbReference type="Rhea" id="RHEA:19569"/>
        <dbReference type="Rhea" id="RHEA-COMP:10195"/>
        <dbReference type="Rhea" id="RHEA-COMP:10197"/>
        <dbReference type="ChEBI" id="CHEBI:15378"/>
        <dbReference type="ChEBI" id="CHEBI:57856"/>
        <dbReference type="ChEBI" id="CHEBI:59789"/>
        <dbReference type="ChEBI" id="CHEBI:74454"/>
        <dbReference type="ChEBI" id="CHEBI:74455"/>
        <dbReference type="EC" id="2.1.1.61"/>
    </reaction>
</comment>
<comment type="cofactor">
    <cofactor evidence="1">
        <name>FAD</name>
        <dbReference type="ChEBI" id="CHEBI:57692"/>
    </cofactor>
</comment>
<comment type="subcellular location">
    <subcellularLocation>
        <location evidence="1">Cytoplasm</location>
    </subcellularLocation>
</comment>
<comment type="similarity">
    <text evidence="1">In the N-terminal section; belongs to the methyltransferase superfamily. tRNA (mnm(5)s(2)U34)-methyltransferase family.</text>
</comment>
<comment type="similarity">
    <text evidence="1">In the C-terminal section; belongs to the DAO family.</text>
</comment>
<dbReference type="EC" id="2.1.1.61" evidence="1"/>
<dbReference type="EC" id="1.5.-.-" evidence="1"/>
<dbReference type="EMBL" id="CP000800">
    <property type="protein sequence ID" value="ABV19096.1"/>
    <property type="molecule type" value="Genomic_DNA"/>
</dbReference>
<dbReference type="RefSeq" id="WP_000683554.1">
    <property type="nucleotide sequence ID" value="NC_009801.1"/>
</dbReference>
<dbReference type="SMR" id="A7ZPE0"/>
<dbReference type="KEGG" id="ecw:EcE24377A_2619"/>
<dbReference type="HOGENOM" id="CLU_022427_1_0_6"/>
<dbReference type="Proteomes" id="UP000001122">
    <property type="component" value="Chromosome"/>
</dbReference>
<dbReference type="GO" id="GO:0005737">
    <property type="term" value="C:cytoplasm"/>
    <property type="evidence" value="ECO:0007669"/>
    <property type="project" value="UniProtKB-SubCell"/>
</dbReference>
<dbReference type="GO" id="GO:0050660">
    <property type="term" value="F:flavin adenine dinucleotide binding"/>
    <property type="evidence" value="ECO:0007669"/>
    <property type="project" value="UniProtKB-UniRule"/>
</dbReference>
<dbReference type="GO" id="GO:0016645">
    <property type="term" value="F:oxidoreductase activity, acting on the CH-NH group of donors"/>
    <property type="evidence" value="ECO:0007669"/>
    <property type="project" value="InterPro"/>
</dbReference>
<dbReference type="GO" id="GO:0004808">
    <property type="term" value="F:tRNA (5-methylaminomethyl-2-thiouridylate)(34)-methyltransferase activity"/>
    <property type="evidence" value="ECO:0007669"/>
    <property type="project" value="UniProtKB-EC"/>
</dbReference>
<dbReference type="GO" id="GO:0032259">
    <property type="term" value="P:methylation"/>
    <property type="evidence" value="ECO:0007669"/>
    <property type="project" value="UniProtKB-KW"/>
</dbReference>
<dbReference type="GO" id="GO:0002098">
    <property type="term" value="P:tRNA wobble uridine modification"/>
    <property type="evidence" value="ECO:0007669"/>
    <property type="project" value="TreeGrafter"/>
</dbReference>
<dbReference type="FunFam" id="3.40.50.150:FF:000107">
    <property type="entry name" value="tRNA 5-methylaminomethyl-2-thiouridine biosynthesis bifunctional protein MnmC"/>
    <property type="match status" value="1"/>
</dbReference>
<dbReference type="Gene3D" id="3.30.9.10">
    <property type="entry name" value="D-Amino Acid Oxidase, subunit A, domain 2"/>
    <property type="match status" value="1"/>
</dbReference>
<dbReference type="Gene3D" id="3.50.50.60">
    <property type="entry name" value="FAD/NAD(P)-binding domain"/>
    <property type="match status" value="1"/>
</dbReference>
<dbReference type="Gene3D" id="3.40.50.150">
    <property type="entry name" value="Vaccinia Virus protein VP39"/>
    <property type="match status" value="1"/>
</dbReference>
<dbReference type="HAMAP" id="MF_01102">
    <property type="entry name" value="MnmC"/>
    <property type="match status" value="1"/>
</dbReference>
<dbReference type="InterPro" id="IPR006076">
    <property type="entry name" value="FAD-dep_OxRdtase"/>
</dbReference>
<dbReference type="InterPro" id="IPR036188">
    <property type="entry name" value="FAD/NAD-bd_sf"/>
</dbReference>
<dbReference type="InterPro" id="IPR008471">
    <property type="entry name" value="MnmC-like_methylTransf"/>
</dbReference>
<dbReference type="InterPro" id="IPR029063">
    <property type="entry name" value="SAM-dependent_MTases_sf"/>
</dbReference>
<dbReference type="InterPro" id="IPR023032">
    <property type="entry name" value="tRNA_MAMT_biosynth_bifunc_MnmC"/>
</dbReference>
<dbReference type="InterPro" id="IPR047785">
    <property type="entry name" value="tRNA_MNMC2"/>
</dbReference>
<dbReference type="InterPro" id="IPR017610">
    <property type="entry name" value="tRNA_S-uridine_synth_MnmC_C"/>
</dbReference>
<dbReference type="NCBIfam" id="TIGR03197">
    <property type="entry name" value="MnmC_Cterm"/>
    <property type="match status" value="1"/>
</dbReference>
<dbReference type="NCBIfam" id="NF002480">
    <property type="entry name" value="PRK01747.1-1"/>
    <property type="match status" value="1"/>
</dbReference>
<dbReference type="NCBIfam" id="NF002481">
    <property type="entry name" value="PRK01747.1-2"/>
    <property type="match status" value="1"/>
</dbReference>
<dbReference type="NCBIfam" id="NF002482">
    <property type="entry name" value="PRK01747.1-3"/>
    <property type="match status" value="1"/>
</dbReference>
<dbReference type="NCBIfam" id="NF002484">
    <property type="entry name" value="PRK01747.1-5"/>
    <property type="match status" value="1"/>
</dbReference>
<dbReference type="NCBIfam" id="NF033855">
    <property type="entry name" value="tRNA_MNMC2"/>
    <property type="match status" value="1"/>
</dbReference>
<dbReference type="PANTHER" id="PTHR13847">
    <property type="entry name" value="SARCOSINE DEHYDROGENASE-RELATED"/>
    <property type="match status" value="1"/>
</dbReference>
<dbReference type="PANTHER" id="PTHR13847:SF283">
    <property type="entry name" value="TRNA 5-METHYLAMINOMETHYL-2-THIOURIDINE BIOSYNTHESIS BIFUNCTIONAL PROTEIN MNMC"/>
    <property type="match status" value="1"/>
</dbReference>
<dbReference type="Pfam" id="PF01266">
    <property type="entry name" value="DAO"/>
    <property type="match status" value="1"/>
</dbReference>
<dbReference type="Pfam" id="PF05430">
    <property type="entry name" value="Methyltransf_30"/>
    <property type="match status" value="1"/>
</dbReference>
<dbReference type="SUPFAM" id="SSF51905">
    <property type="entry name" value="FAD/NAD(P)-binding domain"/>
    <property type="match status" value="1"/>
</dbReference>
<dbReference type="SUPFAM" id="SSF53335">
    <property type="entry name" value="S-adenosyl-L-methionine-dependent methyltransferases"/>
    <property type="match status" value="1"/>
</dbReference>
<keyword id="KW-0963">Cytoplasm</keyword>
<keyword id="KW-0274">FAD</keyword>
<keyword id="KW-0285">Flavoprotein</keyword>
<keyword id="KW-0489">Methyltransferase</keyword>
<keyword id="KW-0511">Multifunctional enzyme</keyword>
<keyword id="KW-0560">Oxidoreductase</keyword>
<keyword id="KW-1185">Reference proteome</keyword>
<keyword id="KW-0949">S-adenosyl-L-methionine</keyword>
<keyword id="KW-0808">Transferase</keyword>
<keyword id="KW-0819">tRNA processing</keyword>
<proteinExistence type="inferred from homology"/>
<name>MNMC_ECO24</name>
<evidence type="ECO:0000255" key="1">
    <source>
        <dbReference type="HAMAP-Rule" id="MF_01102"/>
    </source>
</evidence>
<reference key="1">
    <citation type="journal article" date="2008" name="J. Bacteriol.">
        <title>The pangenome structure of Escherichia coli: comparative genomic analysis of E. coli commensal and pathogenic isolates.</title>
        <authorList>
            <person name="Rasko D.A."/>
            <person name="Rosovitz M.J."/>
            <person name="Myers G.S.A."/>
            <person name="Mongodin E.F."/>
            <person name="Fricke W.F."/>
            <person name="Gajer P."/>
            <person name="Crabtree J."/>
            <person name="Sebaihia M."/>
            <person name="Thomson N.R."/>
            <person name="Chaudhuri R."/>
            <person name="Henderson I.R."/>
            <person name="Sperandio V."/>
            <person name="Ravel J."/>
        </authorList>
    </citation>
    <scope>NUCLEOTIDE SEQUENCE [LARGE SCALE GENOMIC DNA]</scope>
    <source>
        <strain>E24377A / ETEC</strain>
    </source>
</reference>
<accession>A7ZPE0</accession>
<gene>
    <name evidence="1" type="primary">mnmC</name>
    <name type="ordered locus">EcE24377A_2619</name>
</gene>
<sequence length="668" mass="74196">MKHYAIQPANLEFNAEGTPVSRDFDDVYFSNDNGLEETRYVFLGGNQLEVRFPEHPHPLFVVAESGFGTGLNFLTLWQAFDQFREAHPQAQLQRLHFISFEKFPLTRADLALAHLHWPELTPWAEQLQAQWPMPLPGCHRLLLDEGRVTLDLWFGDINELTSQLDDSLNQKVDAWFLDGFAPAKNPDMWTQNLFNAMARLARPGGTLATFTSAGFVRRGLQEAGFTMQKRKGFGRKREMLCGVMEQALPLPCSTPWFNRTGSSKREAAIIGGGIASALLSLALLRRGWQVTLYCADEAPALGASGNRQGALYPLLSKHDEALNRFFSNAFTFARRFYDSLPVKFDHDWCSVTQLGWDEKSQHKIAQMLSMDLPADLAVAVGANEVEGVTGVVTNCGGITYPQGGWLCPAELTRSVLELAQQQGLQIRYQHQLQDLSRKDDGWLLNFAGDQQATHSVVVLANGHQISRFSQTSSLPVYSVAGQVSHIPTTPELAKLKQVLCYDGYLTPQNPANQHHCIGASYHRGSEDTAYSEDDQQQNRQRLIDCFPQAQWAKEVDVSEKEARCGVRCATRDHLPMVGNVPDYEATLVEYASLAEQKDKAVSAPVYDDLFMLAALGSRGLCSAPLCAEILAAQMSDEPIPMDASTLAALNPNRLWVRKLLKGKAVKAG</sequence>